<proteinExistence type="inferred from homology"/>
<accession>A5INQ6</accession>
<name>RL9_STAA9</name>
<keyword id="KW-0687">Ribonucleoprotein</keyword>
<keyword id="KW-0689">Ribosomal protein</keyword>
<keyword id="KW-0694">RNA-binding</keyword>
<keyword id="KW-0699">rRNA-binding</keyword>
<sequence length="148" mass="16454">MKVIFTQDVKGKGKKGEVKEVPVGYANNFLLKKNYAVEATPGNLKQLELQKKRAKQERQQEIEDAKALKETLSNIEVEVSAKTGEGGKLFGSVSTKQIAEALKAQHDIKIDKRKMDLPNGIHSLGYTNVPVKLDKEVEGTIRVHTVEQ</sequence>
<reference key="1">
    <citation type="submission" date="2007-05" db="EMBL/GenBank/DDBJ databases">
        <title>Complete sequence of chromosome of Staphylococcus aureus subsp. aureus JH9.</title>
        <authorList>
            <consortium name="US DOE Joint Genome Institute"/>
            <person name="Copeland A."/>
            <person name="Lucas S."/>
            <person name="Lapidus A."/>
            <person name="Barry K."/>
            <person name="Detter J.C."/>
            <person name="Glavina del Rio T."/>
            <person name="Hammon N."/>
            <person name="Israni S."/>
            <person name="Pitluck S."/>
            <person name="Chain P."/>
            <person name="Malfatti S."/>
            <person name="Shin M."/>
            <person name="Vergez L."/>
            <person name="Schmutz J."/>
            <person name="Larimer F."/>
            <person name="Land M."/>
            <person name="Hauser L."/>
            <person name="Kyrpides N."/>
            <person name="Kim E."/>
            <person name="Tomasz A."/>
            <person name="Richardson P."/>
        </authorList>
    </citation>
    <scope>NUCLEOTIDE SEQUENCE [LARGE SCALE GENOMIC DNA]</scope>
    <source>
        <strain>JH9</strain>
    </source>
</reference>
<comment type="function">
    <text evidence="1">Binds to the 23S rRNA.</text>
</comment>
<comment type="similarity">
    <text evidence="1">Belongs to the bacterial ribosomal protein bL9 family.</text>
</comment>
<organism>
    <name type="scientific">Staphylococcus aureus (strain JH9)</name>
    <dbReference type="NCBI Taxonomy" id="359786"/>
    <lineage>
        <taxon>Bacteria</taxon>
        <taxon>Bacillati</taxon>
        <taxon>Bacillota</taxon>
        <taxon>Bacilli</taxon>
        <taxon>Bacillales</taxon>
        <taxon>Staphylococcaceae</taxon>
        <taxon>Staphylococcus</taxon>
    </lineage>
</organism>
<protein>
    <recommendedName>
        <fullName evidence="1">Large ribosomal subunit protein bL9</fullName>
    </recommendedName>
    <alternativeName>
        <fullName evidence="2">50S ribosomal protein L9</fullName>
    </alternativeName>
</protein>
<dbReference type="EMBL" id="CP000703">
    <property type="protein sequence ID" value="ABQ47829.1"/>
    <property type="molecule type" value="Genomic_DNA"/>
</dbReference>
<dbReference type="RefSeq" id="WP_000864305.1">
    <property type="nucleotide sequence ID" value="NC_009487.1"/>
</dbReference>
<dbReference type="SMR" id="A5INQ6"/>
<dbReference type="KEGG" id="saj:SaurJH9_0015"/>
<dbReference type="HOGENOM" id="CLU_078938_3_2_9"/>
<dbReference type="GO" id="GO:1990904">
    <property type="term" value="C:ribonucleoprotein complex"/>
    <property type="evidence" value="ECO:0007669"/>
    <property type="project" value="UniProtKB-KW"/>
</dbReference>
<dbReference type="GO" id="GO:0005840">
    <property type="term" value="C:ribosome"/>
    <property type="evidence" value="ECO:0007669"/>
    <property type="project" value="UniProtKB-KW"/>
</dbReference>
<dbReference type="GO" id="GO:0019843">
    <property type="term" value="F:rRNA binding"/>
    <property type="evidence" value="ECO:0007669"/>
    <property type="project" value="UniProtKB-UniRule"/>
</dbReference>
<dbReference type="GO" id="GO:0003735">
    <property type="term" value="F:structural constituent of ribosome"/>
    <property type="evidence" value="ECO:0007669"/>
    <property type="project" value="InterPro"/>
</dbReference>
<dbReference type="GO" id="GO:0006412">
    <property type="term" value="P:translation"/>
    <property type="evidence" value="ECO:0007669"/>
    <property type="project" value="UniProtKB-UniRule"/>
</dbReference>
<dbReference type="FunFam" id="3.10.430.100:FF:000002">
    <property type="entry name" value="50S ribosomal protein L9"/>
    <property type="match status" value="1"/>
</dbReference>
<dbReference type="FunFam" id="3.40.5.10:FF:000002">
    <property type="entry name" value="50S ribosomal protein L9"/>
    <property type="match status" value="1"/>
</dbReference>
<dbReference type="Gene3D" id="3.10.430.100">
    <property type="entry name" value="Ribosomal protein L9, C-terminal domain"/>
    <property type="match status" value="1"/>
</dbReference>
<dbReference type="Gene3D" id="3.40.5.10">
    <property type="entry name" value="Ribosomal protein L9, N-terminal domain"/>
    <property type="match status" value="1"/>
</dbReference>
<dbReference type="HAMAP" id="MF_00503">
    <property type="entry name" value="Ribosomal_bL9"/>
    <property type="match status" value="1"/>
</dbReference>
<dbReference type="InterPro" id="IPR000244">
    <property type="entry name" value="Ribosomal_bL9"/>
</dbReference>
<dbReference type="InterPro" id="IPR009027">
    <property type="entry name" value="Ribosomal_bL9/RNase_H1_N"/>
</dbReference>
<dbReference type="InterPro" id="IPR020594">
    <property type="entry name" value="Ribosomal_bL9_bac/chp"/>
</dbReference>
<dbReference type="InterPro" id="IPR020069">
    <property type="entry name" value="Ribosomal_bL9_C"/>
</dbReference>
<dbReference type="InterPro" id="IPR036791">
    <property type="entry name" value="Ribosomal_bL9_C_sf"/>
</dbReference>
<dbReference type="InterPro" id="IPR020070">
    <property type="entry name" value="Ribosomal_bL9_N"/>
</dbReference>
<dbReference type="InterPro" id="IPR036935">
    <property type="entry name" value="Ribosomal_bL9_N_sf"/>
</dbReference>
<dbReference type="NCBIfam" id="TIGR00158">
    <property type="entry name" value="L9"/>
    <property type="match status" value="1"/>
</dbReference>
<dbReference type="PANTHER" id="PTHR21368">
    <property type="entry name" value="50S RIBOSOMAL PROTEIN L9"/>
    <property type="match status" value="1"/>
</dbReference>
<dbReference type="Pfam" id="PF03948">
    <property type="entry name" value="Ribosomal_L9_C"/>
    <property type="match status" value="1"/>
</dbReference>
<dbReference type="Pfam" id="PF01281">
    <property type="entry name" value="Ribosomal_L9_N"/>
    <property type="match status" value="1"/>
</dbReference>
<dbReference type="SUPFAM" id="SSF55658">
    <property type="entry name" value="L9 N-domain-like"/>
    <property type="match status" value="1"/>
</dbReference>
<dbReference type="SUPFAM" id="SSF55653">
    <property type="entry name" value="Ribosomal protein L9 C-domain"/>
    <property type="match status" value="1"/>
</dbReference>
<dbReference type="PROSITE" id="PS00651">
    <property type="entry name" value="RIBOSOMAL_L9"/>
    <property type="match status" value="1"/>
</dbReference>
<feature type="chain" id="PRO_1000081505" description="Large ribosomal subunit protein bL9">
    <location>
        <begin position="1"/>
        <end position="148"/>
    </location>
</feature>
<gene>
    <name evidence="1" type="primary">rplI</name>
    <name type="ordered locus">SaurJH9_0015</name>
</gene>
<evidence type="ECO:0000255" key="1">
    <source>
        <dbReference type="HAMAP-Rule" id="MF_00503"/>
    </source>
</evidence>
<evidence type="ECO:0000305" key="2"/>